<organism>
    <name type="scientific">Streptococcus pyogenes serotype M18 (strain MGAS8232)</name>
    <dbReference type="NCBI Taxonomy" id="186103"/>
    <lineage>
        <taxon>Bacteria</taxon>
        <taxon>Bacillati</taxon>
        <taxon>Bacillota</taxon>
        <taxon>Bacilli</taxon>
        <taxon>Lactobacillales</taxon>
        <taxon>Streptococcaceae</taxon>
        <taxon>Streptococcus</taxon>
    </lineage>
</organism>
<gene>
    <name evidence="2" type="primary">tpiA</name>
    <name type="ordered locus">spyM18_0680</name>
</gene>
<accession>Q8P1W3</accession>
<dbReference type="EC" id="5.3.1.1" evidence="2"/>
<dbReference type="EMBL" id="AE009949">
    <property type="protein sequence ID" value="AAL97355.1"/>
    <property type="molecule type" value="Genomic_DNA"/>
</dbReference>
<dbReference type="RefSeq" id="WP_011017540.1">
    <property type="nucleotide sequence ID" value="NC_003485.1"/>
</dbReference>
<dbReference type="SMR" id="Q8P1W3"/>
<dbReference type="KEGG" id="spm:spyM18_0680"/>
<dbReference type="HOGENOM" id="CLU_024251_2_3_9"/>
<dbReference type="UniPathway" id="UPA00109">
    <property type="reaction ID" value="UER00189"/>
</dbReference>
<dbReference type="UniPathway" id="UPA00138"/>
<dbReference type="GO" id="GO:0005829">
    <property type="term" value="C:cytosol"/>
    <property type="evidence" value="ECO:0007669"/>
    <property type="project" value="TreeGrafter"/>
</dbReference>
<dbReference type="GO" id="GO:0004807">
    <property type="term" value="F:triose-phosphate isomerase activity"/>
    <property type="evidence" value="ECO:0007669"/>
    <property type="project" value="UniProtKB-UniRule"/>
</dbReference>
<dbReference type="GO" id="GO:0006094">
    <property type="term" value="P:gluconeogenesis"/>
    <property type="evidence" value="ECO:0007669"/>
    <property type="project" value="UniProtKB-UniRule"/>
</dbReference>
<dbReference type="GO" id="GO:0046166">
    <property type="term" value="P:glyceraldehyde-3-phosphate biosynthetic process"/>
    <property type="evidence" value="ECO:0007669"/>
    <property type="project" value="TreeGrafter"/>
</dbReference>
<dbReference type="GO" id="GO:0019563">
    <property type="term" value="P:glycerol catabolic process"/>
    <property type="evidence" value="ECO:0007669"/>
    <property type="project" value="TreeGrafter"/>
</dbReference>
<dbReference type="GO" id="GO:0006096">
    <property type="term" value="P:glycolytic process"/>
    <property type="evidence" value="ECO:0007669"/>
    <property type="project" value="UniProtKB-UniRule"/>
</dbReference>
<dbReference type="CDD" id="cd00311">
    <property type="entry name" value="TIM"/>
    <property type="match status" value="1"/>
</dbReference>
<dbReference type="FunFam" id="3.20.20.70:FF:000016">
    <property type="entry name" value="Triosephosphate isomerase"/>
    <property type="match status" value="1"/>
</dbReference>
<dbReference type="Gene3D" id="3.20.20.70">
    <property type="entry name" value="Aldolase class I"/>
    <property type="match status" value="1"/>
</dbReference>
<dbReference type="HAMAP" id="MF_00147_B">
    <property type="entry name" value="TIM_B"/>
    <property type="match status" value="1"/>
</dbReference>
<dbReference type="InterPro" id="IPR013785">
    <property type="entry name" value="Aldolase_TIM"/>
</dbReference>
<dbReference type="InterPro" id="IPR035990">
    <property type="entry name" value="TIM_sf"/>
</dbReference>
<dbReference type="InterPro" id="IPR022896">
    <property type="entry name" value="TrioseP_Isoase_bac/euk"/>
</dbReference>
<dbReference type="InterPro" id="IPR000652">
    <property type="entry name" value="Triosephosphate_isomerase"/>
</dbReference>
<dbReference type="InterPro" id="IPR020861">
    <property type="entry name" value="Triosephosphate_isomerase_AS"/>
</dbReference>
<dbReference type="NCBIfam" id="TIGR00419">
    <property type="entry name" value="tim"/>
    <property type="match status" value="1"/>
</dbReference>
<dbReference type="PANTHER" id="PTHR21139">
    <property type="entry name" value="TRIOSEPHOSPHATE ISOMERASE"/>
    <property type="match status" value="1"/>
</dbReference>
<dbReference type="PANTHER" id="PTHR21139:SF42">
    <property type="entry name" value="TRIOSEPHOSPHATE ISOMERASE"/>
    <property type="match status" value="1"/>
</dbReference>
<dbReference type="Pfam" id="PF00121">
    <property type="entry name" value="TIM"/>
    <property type="match status" value="1"/>
</dbReference>
<dbReference type="SUPFAM" id="SSF51351">
    <property type="entry name" value="Triosephosphate isomerase (TIM)"/>
    <property type="match status" value="1"/>
</dbReference>
<dbReference type="PROSITE" id="PS00171">
    <property type="entry name" value="TIM_1"/>
    <property type="match status" value="1"/>
</dbReference>
<dbReference type="PROSITE" id="PS51440">
    <property type="entry name" value="TIM_2"/>
    <property type="match status" value="1"/>
</dbReference>
<proteinExistence type="inferred from homology"/>
<name>TPIS_STRP8</name>
<evidence type="ECO:0000250" key="1"/>
<evidence type="ECO:0000255" key="2">
    <source>
        <dbReference type="HAMAP-Rule" id="MF_00147"/>
    </source>
</evidence>
<keyword id="KW-0963">Cytoplasm</keyword>
<keyword id="KW-0312">Gluconeogenesis</keyword>
<keyword id="KW-0324">Glycolysis</keyword>
<keyword id="KW-0413">Isomerase</keyword>
<reference key="1">
    <citation type="journal article" date="2002" name="Proc. Natl. Acad. Sci. U.S.A.">
        <title>Genome sequence and comparative microarray analysis of serotype M18 group A Streptococcus strains associated with acute rheumatic fever outbreaks.</title>
        <authorList>
            <person name="Smoot J.C."/>
            <person name="Barbian K.D."/>
            <person name="Van Gompel J.J."/>
            <person name="Smoot L.M."/>
            <person name="Chaussee M.S."/>
            <person name="Sylva G.L."/>
            <person name="Sturdevant D.E."/>
            <person name="Ricklefs S.M."/>
            <person name="Porcella S.F."/>
            <person name="Parkins L.D."/>
            <person name="Beres S.B."/>
            <person name="Campbell D.S."/>
            <person name="Smith T.M."/>
            <person name="Zhang Q."/>
            <person name="Kapur V."/>
            <person name="Daly J.A."/>
            <person name="Veasy L.G."/>
            <person name="Musser J.M."/>
        </authorList>
    </citation>
    <scope>NUCLEOTIDE SEQUENCE [LARGE SCALE GENOMIC DNA]</scope>
    <source>
        <strain>MGAS8232</strain>
    </source>
</reference>
<sequence>MSRKPIIAGNWKMNKNPQEAKAFVEAVASKLPSTDLVDVAVAAPAVDLVTTIEAAKDSVLKVAAQNCYFENTGAFTGETSPKVLAEMGADYVVIGHSERRDYFHETDEDINKKAKAIFANGLTPIICCGESLETYEAGKAAEFVGAQVSAALAGLSAEQVASLVLAYEPIWAIGTGKSATQDDAQNMCKAVRDVVAADFGQEVADKVRVQYGGSVKPENVKDYMACPDVDGALVGGASLEADSFLALLDFLN</sequence>
<feature type="initiator methionine" description="Removed" evidence="1">
    <location>
        <position position="1"/>
    </location>
</feature>
<feature type="chain" id="PRO_0000090302" description="Triosephosphate isomerase">
    <location>
        <begin position="2"/>
        <end position="252"/>
    </location>
</feature>
<feature type="active site" description="Electrophile" evidence="2">
    <location>
        <position position="96"/>
    </location>
</feature>
<feature type="active site" description="Proton acceptor" evidence="2">
    <location>
        <position position="168"/>
    </location>
</feature>
<feature type="binding site" evidence="2">
    <location>
        <begin position="10"/>
        <end position="12"/>
    </location>
    <ligand>
        <name>substrate</name>
    </ligand>
</feature>
<feature type="binding site" evidence="2">
    <location>
        <position position="174"/>
    </location>
    <ligand>
        <name>substrate</name>
    </ligand>
</feature>
<feature type="binding site" evidence="2">
    <location>
        <position position="214"/>
    </location>
    <ligand>
        <name>substrate</name>
    </ligand>
</feature>
<feature type="binding site" evidence="2">
    <location>
        <begin position="235"/>
        <end position="236"/>
    </location>
    <ligand>
        <name>substrate</name>
    </ligand>
</feature>
<protein>
    <recommendedName>
        <fullName evidence="2">Triosephosphate isomerase</fullName>
        <shortName evidence="2">TIM</shortName>
        <shortName evidence="2">TPI</shortName>
        <ecNumber evidence="2">5.3.1.1</ecNumber>
    </recommendedName>
    <alternativeName>
        <fullName evidence="2">Triose-phosphate isomerase</fullName>
    </alternativeName>
</protein>
<comment type="function">
    <text evidence="2">Involved in the gluconeogenesis. Catalyzes stereospecifically the conversion of dihydroxyacetone phosphate (DHAP) to D-glyceraldehyde-3-phosphate (G3P).</text>
</comment>
<comment type="catalytic activity">
    <reaction evidence="2">
        <text>D-glyceraldehyde 3-phosphate = dihydroxyacetone phosphate</text>
        <dbReference type="Rhea" id="RHEA:18585"/>
        <dbReference type="ChEBI" id="CHEBI:57642"/>
        <dbReference type="ChEBI" id="CHEBI:59776"/>
        <dbReference type="EC" id="5.3.1.1"/>
    </reaction>
</comment>
<comment type="pathway">
    <text evidence="2">Carbohydrate biosynthesis; gluconeogenesis.</text>
</comment>
<comment type="pathway">
    <text evidence="2">Carbohydrate degradation; glycolysis; D-glyceraldehyde 3-phosphate from glycerone phosphate: step 1/1.</text>
</comment>
<comment type="subunit">
    <text evidence="2">Homodimer.</text>
</comment>
<comment type="subcellular location">
    <subcellularLocation>
        <location evidence="2">Cytoplasm</location>
    </subcellularLocation>
</comment>
<comment type="similarity">
    <text evidence="2">Belongs to the triosephosphate isomerase family.</text>
</comment>